<reference key="1">
    <citation type="submission" date="2007-06" db="EMBL/GenBank/DDBJ databases">
        <authorList>
            <person name="Brinkac L.M."/>
            <person name="Daugherty S."/>
            <person name="Dodson R.J."/>
            <person name="Madupu R."/>
            <person name="Brown J.L."/>
            <person name="Bruce D."/>
            <person name="Detter C."/>
            <person name="Munk C."/>
            <person name="Smith L.A."/>
            <person name="Smith T.J."/>
            <person name="White O."/>
            <person name="Brettin T.S."/>
        </authorList>
    </citation>
    <scope>NUCLEOTIDE SEQUENCE [LARGE SCALE GENOMIC DNA]</scope>
    <source>
        <strain>Langeland / NCTC 10281 / Type F</strain>
    </source>
</reference>
<comment type="function">
    <text evidence="1">Methylates ribosomal protein L11.</text>
</comment>
<comment type="catalytic activity">
    <reaction evidence="1">
        <text>L-lysyl-[protein] + 3 S-adenosyl-L-methionine = N(6),N(6),N(6)-trimethyl-L-lysyl-[protein] + 3 S-adenosyl-L-homocysteine + 3 H(+)</text>
        <dbReference type="Rhea" id="RHEA:54192"/>
        <dbReference type="Rhea" id="RHEA-COMP:9752"/>
        <dbReference type="Rhea" id="RHEA-COMP:13826"/>
        <dbReference type="ChEBI" id="CHEBI:15378"/>
        <dbReference type="ChEBI" id="CHEBI:29969"/>
        <dbReference type="ChEBI" id="CHEBI:57856"/>
        <dbReference type="ChEBI" id="CHEBI:59789"/>
        <dbReference type="ChEBI" id="CHEBI:61961"/>
    </reaction>
</comment>
<comment type="subcellular location">
    <subcellularLocation>
        <location evidence="1">Cytoplasm</location>
    </subcellularLocation>
</comment>
<comment type="similarity">
    <text evidence="1">Belongs to the methyltransferase superfamily. PrmA family.</text>
</comment>
<dbReference type="EC" id="2.1.1.-" evidence="1"/>
<dbReference type="EMBL" id="CP000728">
    <property type="protein sequence ID" value="ABS42307.1"/>
    <property type="molecule type" value="Genomic_DNA"/>
</dbReference>
<dbReference type="RefSeq" id="WP_004451907.1">
    <property type="nucleotide sequence ID" value="NC_009699.1"/>
</dbReference>
<dbReference type="SMR" id="A7GHH4"/>
<dbReference type="KEGG" id="cbf:CLI_3010"/>
<dbReference type="HOGENOM" id="CLU_049382_0_1_9"/>
<dbReference type="Proteomes" id="UP000002410">
    <property type="component" value="Chromosome"/>
</dbReference>
<dbReference type="GO" id="GO:0005737">
    <property type="term" value="C:cytoplasm"/>
    <property type="evidence" value="ECO:0007669"/>
    <property type="project" value="UniProtKB-SubCell"/>
</dbReference>
<dbReference type="GO" id="GO:0016279">
    <property type="term" value="F:protein-lysine N-methyltransferase activity"/>
    <property type="evidence" value="ECO:0007669"/>
    <property type="project" value="RHEA"/>
</dbReference>
<dbReference type="GO" id="GO:0032259">
    <property type="term" value="P:methylation"/>
    <property type="evidence" value="ECO:0007669"/>
    <property type="project" value="UniProtKB-KW"/>
</dbReference>
<dbReference type="CDD" id="cd02440">
    <property type="entry name" value="AdoMet_MTases"/>
    <property type="match status" value="1"/>
</dbReference>
<dbReference type="Gene3D" id="3.40.50.150">
    <property type="entry name" value="Vaccinia Virus protein VP39"/>
    <property type="match status" value="1"/>
</dbReference>
<dbReference type="HAMAP" id="MF_00735">
    <property type="entry name" value="Methyltr_PrmA"/>
    <property type="match status" value="1"/>
</dbReference>
<dbReference type="InterPro" id="IPR050078">
    <property type="entry name" value="Ribosomal_L11_MeTrfase_PrmA"/>
</dbReference>
<dbReference type="InterPro" id="IPR004498">
    <property type="entry name" value="Ribosomal_PrmA_MeTrfase"/>
</dbReference>
<dbReference type="InterPro" id="IPR029063">
    <property type="entry name" value="SAM-dependent_MTases_sf"/>
</dbReference>
<dbReference type="NCBIfam" id="TIGR00406">
    <property type="entry name" value="prmA"/>
    <property type="match status" value="1"/>
</dbReference>
<dbReference type="PANTHER" id="PTHR43648">
    <property type="entry name" value="ELECTRON TRANSFER FLAVOPROTEIN BETA SUBUNIT LYSINE METHYLTRANSFERASE"/>
    <property type="match status" value="1"/>
</dbReference>
<dbReference type="PANTHER" id="PTHR43648:SF1">
    <property type="entry name" value="ELECTRON TRANSFER FLAVOPROTEIN BETA SUBUNIT LYSINE METHYLTRANSFERASE"/>
    <property type="match status" value="1"/>
</dbReference>
<dbReference type="Pfam" id="PF06325">
    <property type="entry name" value="PrmA"/>
    <property type="match status" value="1"/>
</dbReference>
<dbReference type="PIRSF" id="PIRSF000401">
    <property type="entry name" value="RPL11_MTase"/>
    <property type="match status" value="1"/>
</dbReference>
<dbReference type="SUPFAM" id="SSF53335">
    <property type="entry name" value="S-adenosyl-L-methionine-dependent methyltransferases"/>
    <property type="match status" value="1"/>
</dbReference>
<feature type="chain" id="PRO_1000046011" description="Ribosomal protein L11 methyltransferase">
    <location>
        <begin position="1"/>
        <end position="312"/>
    </location>
</feature>
<feature type="binding site" evidence="1">
    <location>
        <position position="163"/>
    </location>
    <ligand>
        <name>S-adenosyl-L-methionine</name>
        <dbReference type="ChEBI" id="CHEBI:59789"/>
    </ligand>
</feature>
<feature type="binding site" evidence="1">
    <location>
        <position position="184"/>
    </location>
    <ligand>
        <name>S-adenosyl-L-methionine</name>
        <dbReference type="ChEBI" id="CHEBI:59789"/>
    </ligand>
</feature>
<feature type="binding site" evidence="1">
    <location>
        <position position="206"/>
    </location>
    <ligand>
        <name>S-adenosyl-L-methionine</name>
        <dbReference type="ChEBI" id="CHEBI:59789"/>
    </ligand>
</feature>
<feature type="binding site" evidence="1">
    <location>
        <position position="248"/>
    </location>
    <ligand>
        <name>S-adenosyl-L-methionine</name>
        <dbReference type="ChEBI" id="CHEBI:59789"/>
    </ligand>
</feature>
<proteinExistence type="inferred from homology"/>
<name>PRMA_CLOBL</name>
<protein>
    <recommendedName>
        <fullName evidence="1">Ribosomal protein L11 methyltransferase</fullName>
        <shortName evidence="1">L11 Mtase</shortName>
        <ecNumber evidence="1">2.1.1.-</ecNumber>
    </recommendedName>
</protein>
<accession>A7GHH4</accession>
<keyword id="KW-0963">Cytoplasm</keyword>
<keyword id="KW-0489">Methyltransferase</keyword>
<keyword id="KW-0949">S-adenosyl-L-methionine</keyword>
<keyword id="KW-0808">Transferase</keyword>
<sequence length="312" mass="35338">MDKEWLEVCIYTSSEALEAISGILYNTGVKGVSIEDPKDIEFKRKHPGDWDYFDETLLKVKDTAIVKGYYKEDDKFNEYLDYIKKSVSNLDQFGIDKGEGLVEVHEVNEEDWENNWKKYYKPTKVSNKIVIKPIWENYDKKQEEIIVELDPGMAFGTGTHETTRMCINALEKYIKEDRTVFDIGCGSGILSIAAAKLGAKHVIGVDLDPVAVKSSKENIKYNNLDNIEILEGNLMEVVEGRANIVVANIIADVIIFLTEGVKAFIEKGGYFIASGIINSRKEDVIKKLEETGFIIEEVREEGEWACIVSKIN</sequence>
<gene>
    <name evidence="1" type="primary">prmA</name>
    <name type="ordered locus">CLI_3010</name>
</gene>
<organism>
    <name type="scientific">Clostridium botulinum (strain Langeland / NCTC 10281 / Type F)</name>
    <dbReference type="NCBI Taxonomy" id="441772"/>
    <lineage>
        <taxon>Bacteria</taxon>
        <taxon>Bacillati</taxon>
        <taxon>Bacillota</taxon>
        <taxon>Clostridia</taxon>
        <taxon>Eubacteriales</taxon>
        <taxon>Clostridiaceae</taxon>
        <taxon>Clostridium</taxon>
    </lineage>
</organism>
<evidence type="ECO:0000255" key="1">
    <source>
        <dbReference type="HAMAP-Rule" id="MF_00735"/>
    </source>
</evidence>